<evidence type="ECO:0000255" key="1">
    <source>
        <dbReference type="HAMAP-Rule" id="MF_01384"/>
    </source>
</evidence>
<evidence type="ECO:0000305" key="2"/>
<keyword id="KW-0143">Chaperone</keyword>
<keyword id="KW-0963">Cytoplasm</keyword>
<keyword id="KW-0996">Nickel insertion</keyword>
<sequence length="291" mass="33897">MNRIQQTFQTSSAPFWYAQLELGFCYENSRTIMSHRKHYGPVRVQKMLWPEKTGVCHAIIVHPPAGIAGGDHLTFQIETERQAHAVITTPGAGKWYRTNGKHAFQHIYLNVKDDSILEWMPQETMLFDGALAHSETDIHLEQTASFIGWDMLVLGRQARAENFVQGSYHNQFKLWRKNKLLVADTLYFEGGDRWLSSCLGMNNQAVMASFWAVPPEKFRSSFYLEQHIELIRELIMRMDVPVTLTLLEDVLCARFLGNDVRRCHDAFAAIRAKLRRYWFDLDEEFPRIWKT</sequence>
<feature type="chain" id="PRO_0000346548" description="Urease accessory protein UreD">
    <location>
        <begin position="1"/>
        <end position="291"/>
    </location>
</feature>
<dbReference type="EMBL" id="CP000863">
    <property type="protein sequence ID" value="ACC56283.1"/>
    <property type="status" value="ALT_INIT"/>
    <property type="molecule type" value="Genomic_DNA"/>
</dbReference>
<dbReference type="RefSeq" id="WP_002017326.1">
    <property type="nucleotide sequence ID" value="NZ_CP031380.1"/>
</dbReference>
<dbReference type="SMR" id="B2HVR7"/>
<dbReference type="KEGG" id="abc:ACICU_00971"/>
<dbReference type="HOGENOM" id="CLU_056339_0_0_6"/>
<dbReference type="Proteomes" id="UP000008839">
    <property type="component" value="Chromosome"/>
</dbReference>
<dbReference type="GO" id="GO:0005737">
    <property type="term" value="C:cytoplasm"/>
    <property type="evidence" value="ECO:0007669"/>
    <property type="project" value="UniProtKB-SubCell"/>
</dbReference>
<dbReference type="GO" id="GO:0016151">
    <property type="term" value="F:nickel cation binding"/>
    <property type="evidence" value="ECO:0007669"/>
    <property type="project" value="UniProtKB-UniRule"/>
</dbReference>
<dbReference type="HAMAP" id="MF_01384">
    <property type="entry name" value="UreD"/>
    <property type="match status" value="1"/>
</dbReference>
<dbReference type="InterPro" id="IPR002669">
    <property type="entry name" value="UreD"/>
</dbReference>
<dbReference type="PANTHER" id="PTHR33643">
    <property type="entry name" value="UREASE ACCESSORY PROTEIN D"/>
    <property type="match status" value="1"/>
</dbReference>
<dbReference type="PANTHER" id="PTHR33643:SF1">
    <property type="entry name" value="UREASE ACCESSORY PROTEIN D"/>
    <property type="match status" value="1"/>
</dbReference>
<dbReference type="Pfam" id="PF01774">
    <property type="entry name" value="UreD"/>
    <property type="match status" value="1"/>
</dbReference>
<accession>B2HVR7</accession>
<comment type="function">
    <text evidence="1">Required for maturation of urease via the functional incorporation of the urease nickel metallocenter.</text>
</comment>
<comment type="subunit">
    <text evidence="1">UreD, UreF and UreG form a complex that acts as a GTP-hydrolysis-dependent molecular chaperone, activating the urease apoprotein by helping to assemble the nickel containing metallocenter of UreC. The UreE protein probably delivers the nickel.</text>
</comment>
<comment type="subcellular location">
    <subcellularLocation>
        <location evidence="1">Cytoplasm</location>
    </subcellularLocation>
</comment>
<comment type="similarity">
    <text evidence="1">Belongs to the UreD family.</text>
</comment>
<comment type="sequence caution" evidence="2">
    <conflict type="erroneous initiation">
        <sequence resource="EMBL-CDS" id="ACC56283"/>
    </conflict>
</comment>
<proteinExistence type="inferred from homology"/>
<gene>
    <name evidence="1" type="primary">ureD</name>
    <name type="ordered locus">ACICU_00971</name>
</gene>
<protein>
    <recommendedName>
        <fullName evidence="1">Urease accessory protein UreD</fullName>
    </recommendedName>
</protein>
<organism>
    <name type="scientific">Acinetobacter baumannii (strain ACICU)</name>
    <dbReference type="NCBI Taxonomy" id="405416"/>
    <lineage>
        <taxon>Bacteria</taxon>
        <taxon>Pseudomonadati</taxon>
        <taxon>Pseudomonadota</taxon>
        <taxon>Gammaproteobacteria</taxon>
        <taxon>Moraxellales</taxon>
        <taxon>Moraxellaceae</taxon>
        <taxon>Acinetobacter</taxon>
        <taxon>Acinetobacter calcoaceticus/baumannii complex</taxon>
    </lineage>
</organism>
<reference key="1">
    <citation type="journal article" date="2008" name="Antimicrob. Agents Chemother.">
        <title>Whole-genome pyrosequencing of an epidemic multidrug-resistant Acinetobacter baumannii strain belonging to the European clone II group.</title>
        <authorList>
            <person name="Iacono M."/>
            <person name="Villa L."/>
            <person name="Fortini D."/>
            <person name="Bordoni R."/>
            <person name="Imperi F."/>
            <person name="Bonnal R.J."/>
            <person name="Sicheritz-Ponten T."/>
            <person name="De Bellis G."/>
            <person name="Visca P."/>
            <person name="Cassone A."/>
            <person name="Carattoli A."/>
        </authorList>
    </citation>
    <scope>NUCLEOTIDE SEQUENCE [LARGE SCALE GENOMIC DNA]</scope>
    <source>
        <strain>ACICU</strain>
    </source>
</reference>
<name>URED_ACIBC</name>